<gene>
    <name evidence="1" type="primary">tsf</name>
    <name type="ordered locus">Amet_2688</name>
</gene>
<accession>A6TRM2</accession>
<feature type="chain" id="PRO_1000071118" description="Elongation factor Ts">
    <location>
        <begin position="1"/>
        <end position="215"/>
    </location>
</feature>
<feature type="region of interest" description="Involved in Mg(2+) ion dislocation from EF-Tu" evidence="1">
    <location>
        <begin position="80"/>
        <end position="83"/>
    </location>
</feature>
<protein>
    <recommendedName>
        <fullName evidence="1">Elongation factor Ts</fullName>
        <shortName evidence="1">EF-Ts</shortName>
    </recommendedName>
</protein>
<evidence type="ECO:0000255" key="1">
    <source>
        <dbReference type="HAMAP-Rule" id="MF_00050"/>
    </source>
</evidence>
<name>EFTS_ALKMQ</name>
<comment type="function">
    <text evidence="1">Associates with the EF-Tu.GDP complex and induces the exchange of GDP to GTP. It remains bound to the aminoacyl-tRNA.EF-Tu.GTP complex up to the GTP hydrolysis stage on the ribosome.</text>
</comment>
<comment type="subcellular location">
    <subcellularLocation>
        <location evidence="1">Cytoplasm</location>
    </subcellularLocation>
</comment>
<comment type="similarity">
    <text evidence="1">Belongs to the EF-Ts family.</text>
</comment>
<organism>
    <name type="scientific">Alkaliphilus metalliredigens (strain QYMF)</name>
    <dbReference type="NCBI Taxonomy" id="293826"/>
    <lineage>
        <taxon>Bacteria</taxon>
        <taxon>Bacillati</taxon>
        <taxon>Bacillota</taxon>
        <taxon>Clostridia</taxon>
        <taxon>Peptostreptococcales</taxon>
        <taxon>Natronincolaceae</taxon>
        <taxon>Alkaliphilus</taxon>
    </lineage>
</organism>
<keyword id="KW-0963">Cytoplasm</keyword>
<keyword id="KW-0251">Elongation factor</keyword>
<keyword id="KW-0648">Protein biosynthesis</keyword>
<keyword id="KW-1185">Reference proteome</keyword>
<sequence>MSITAAMVKEIREKTGAGMMDCKKALTEASGNMEKATEILREKGLAAVAKKAGRIASEGIVESYIHGGRIGVLVEVNSETDFVAKNQEFKDFVKDVAMHIAATNPQYVKRDEVDPLIIEKEKEFLTKQALNEGKPEKIVEKMVEGRIDKFLKEICLLDQPFVKNPDVTIGDLLTEKIAKIGENLSIRRFVRFEVGEGIEKKEENFAEEVAKQMAK</sequence>
<reference key="1">
    <citation type="journal article" date="2016" name="Genome Announc.">
        <title>Complete genome sequence of Alkaliphilus metalliredigens strain QYMF, an alkaliphilic and metal-reducing bacterium isolated from borax-contaminated leachate ponds.</title>
        <authorList>
            <person name="Hwang C."/>
            <person name="Copeland A."/>
            <person name="Lucas S."/>
            <person name="Lapidus A."/>
            <person name="Barry K."/>
            <person name="Detter J.C."/>
            <person name="Glavina Del Rio T."/>
            <person name="Hammon N."/>
            <person name="Israni S."/>
            <person name="Dalin E."/>
            <person name="Tice H."/>
            <person name="Pitluck S."/>
            <person name="Chertkov O."/>
            <person name="Brettin T."/>
            <person name="Bruce D."/>
            <person name="Han C."/>
            <person name="Schmutz J."/>
            <person name="Larimer F."/>
            <person name="Land M.L."/>
            <person name="Hauser L."/>
            <person name="Kyrpides N."/>
            <person name="Mikhailova N."/>
            <person name="Ye Q."/>
            <person name="Zhou J."/>
            <person name="Richardson P."/>
            <person name="Fields M.W."/>
        </authorList>
    </citation>
    <scope>NUCLEOTIDE SEQUENCE [LARGE SCALE GENOMIC DNA]</scope>
    <source>
        <strain>QYMF</strain>
    </source>
</reference>
<proteinExistence type="inferred from homology"/>
<dbReference type="EMBL" id="CP000724">
    <property type="protein sequence ID" value="ABR48840.1"/>
    <property type="molecule type" value="Genomic_DNA"/>
</dbReference>
<dbReference type="RefSeq" id="WP_012063813.1">
    <property type="nucleotide sequence ID" value="NC_009633.1"/>
</dbReference>
<dbReference type="SMR" id="A6TRM2"/>
<dbReference type="STRING" id="293826.Amet_2688"/>
<dbReference type="KEGG" id="amt:Amet_2688"/>
<dbReference type="eggNOG" id="COG0264">
    <property type="taxonomic scope" value="Bacteria"/>
</dbReference>
<dbReference type="HOGENOM" id="CLU_047155_1_1_9"/>
<dbReference type="OrthoDB" id="9808348at2"/>
<dbReference type="Proteomes" id="UP000001572">
    <property type="component" value="Chromosome"/>
</dbReference>
<dbReference type="GO" id="GO:0005737">
    <property type="term" value="C:cytoplasm"/>
    <property type="evidence" value="ECO:0007669"/>
    <property type="project" value="UniProtKB-SubCell"/>
</dbReference>
<dbReference type="GO" id="GO:0003746">
    <property type="term" value="F:translation elongation factor activity"/>
    <property type="evidence" value="ECO:0007669"/>
    <property type="project" value="UniProtKB-UniRule"/>
</dbReference>
<dbReference type="CDD" id="cd14275">
    <property type="entry name" value="UBA_EF-Ts"/>
    <property type="match status" value="1"/>
</dbReference>
<dbReference type="FunFam" id="1.10.286.20:FF:000001">
    <property type="entry name" value="Elongation factor Ts"/>
    <property type="match status" value="1"/>
</dbReference>
<dbReference type="FunFam" id="1.10.8.10:FF:000001">
    <property type="entry name" value="Elongation factor Ts"/>
    <property type="match status" value="1"/>
</dbReference>
<dbReference type="Gene3D" id="1.10.286.20">
    <property type="match status" value="1"/>
</dbReference>
<dbReference type="Gene3D" id="1.10.8.10">
    <property type="entry name" value="DNA helicase RuvA subunit, C-terminal domain"/>
    <property type="match status" value="1"/>
</dbReference>
<dbReference type="Gene3D" id="3.30.479.20">
    <property type="entry name" value="Elongation factor Ts, dimerisation domain"/>
    <property type="match status" value="1"/>
</dbReference>
<dbReference type="HAMAP" id="MF_00050">
    <property type="entry name" value="EF_Ts"/>
    <property type="match status" value="1"/>
</dbReference>
<dbReference type="InterPro" id="IPR036402">
    <property type="entry name" value="EF-Ts_dimer_sf"/>
</dbReference>
<dbReference type="InterPro" id="IPR001816">
    <property type="entry name" value="Transl_elong_EFTs/EF1B"/>
</dbReference>
<dbReference type="InterPro" id="IPR014039">
    <property type="entry name" value="Transl_elong_EFTs/EF1B_dimer"/>
</dbReference>
<dbReference type="InterPro" id="IPR018101">
    <property type="entry name" value="Transl_elong_Ts_CS"/>
</dbReference>
<dbReference type="InterPro" id="IPR009060">
    <property type="entry name" value="UBA-like_sf"/>
</dbReference>
<dbReference type="NCBIfam" id="TIGR00116">
    <property type="entry name" value="tsf"/>
    <property type="match status" value="2"/>
</dbReference>
<dbReference type="PANTHER" id="PTHR11741">
    <property type="entry name" value="ELONGATION FACTOR TS"/>
    <property type="match status" value="1"/>
</dbReference>
<dbReference type="PANTHER" id="PTHR11741:SF0">
    <property type="entry name" value="ELONGATION FACTOR TS, MITOCHONDRIAL"/>
    <property type="match status" value="1"/>
</dbReference>
<dbReference type="Pfam" id="PF00889">
    <property type="entry name" value="EF_TS"/>
    <property type="match status" value="2"/>
</dbReference>
<dbReference type="SUPFAM" id="SSF54713">
    <property type="entry name" value="Elongation factor Ts (EF-Ts), dimerisation domain"/>
    <property type="match status" value="1"/>
</dbReference>
<dbReference type="SUPFAM" id="SSF46934">
    <property type="entry name" value="UBA-like"/>
    <property type="match status" value="1"/>
</dbReference>
<dbReference type="PROSITE" id="PS01127">
    <property type="entry name" value="EF_TS_2"/>
    <property type="match status" value="1"/>
</dbReference>